<evidence type="ECO:0000255" key="1">
    <source>
        <dbReference type="HAMAP-Rule" id="MF_01307"/>
    </source>
</evidence>
<evidence type="ECO:0000305" key="2"/>
<sequence length="167" mass="17533">MSHIEKQAGELQEKLIAVNRVSKTVKGGRIFSFTALTVVGDGNGRVGFGYGKAREVPAAIQKAMEKARRAMINVALNNGTLQHPVKGAHTGSRVFMQPASEGTGIIAGGAMRAVLEVAGVHNVLAKAYGSTNPINVVRATIAALEDMKSPEMVAAKRGKSVEEILGK</sequence>
<comment type="function">
    <text evidence="1">With S4 and S12 plays an important role in translational accuracy.</text>
</comment>
<comment type="function">
    <text evidence="1">Located at the back of the 30S subunit body where it stabilizes the conformation of the head with respect to the body.</text>
</comment>
<comment type="subunit">
    <text evidence="1">Part of the 30S ribosomal subunit. Contacts proteins S4 and S8.</text>
</comment>
<comment type="domain">
    <text>The N-terminal domain interacts with the head of the 30S subunit; the C-terminal domain interacts with the body and contacts protein S4. The interaction surface between S4 and S5 is involved in control of translational fidelity.</text>
</comment>
<comment type="similarity">
    <text evidence="1">Belongs to the universal ribosomal protein uS5 family.</text>
</comment>
<dbReference type="EMBL" id="CP000668">
    <property type="protein sequence ID" value="ABP38572.1"/>
    <property type="molecule type" value="Genomic_DNA"/>
</dbReference>
<dbReference type="RefSeq" id="WP_002213337.1">
    <property type="nucleotide sequence ID" value="NZ_CP009715.1"/>
</dbReference>
<dbReference type="SMR" id="A4TH09"/>
<dbReference type="GeneID" id="82552805"/>
<dbReference type="KEGG" id="ypp:YPDSF_0150"/>
<dbReference type="PATRIC" id="fig|386656.14.peg.417"/>
<dbReference type="GO" id="GO:0015935">
    <property type="term" value="C:small ribosomal subunit"/>
    <property type="evidence" value="ECO:0007669"/>
    <property type="project" value="InterPro"/>
</dbReference>
<dbReference type="GO" id="GO:0019843">
    <property type="term" value="F:rRNA binding"/>
    <property type="evidence" value="ECO:0007669"/>
    <property type="project" value="UniProtKB-UniRule"/>
</dbReference>
<dbReference type="GO" id="GO:0003735">
    <property type="term" value="F:structural constituent of ribosome"/>
    <property type="evidence" value="ECO:0007669"/>
    <property type="project" value="InterPro"/>
</dbReference>
<dbReference type="GO" id="GO:0006412">
    <property type="term" value="P:translation"/>
    <property type="evidence" value="ECO:0007669"/>
    <property type="project" value="UniProtKB-UniRule"/>
</dbReference>
<dbReference type="FunFam" id="3.30.160.20:FF:000001">
    <property type="entry name" value="30S ribosomal protein S5"/>
    <property type="match status" value="1"/>
</dbReference>
<dbReference type="FunFam" id="3.30.230.10:FF:000002">
    <property type="entry name" value="30S ribosomal protein S5"/>
    <property type="match status" value="1"/>
</dbReference>
<dbReference type="Gene3D" id="3.30.160.20">
    <property type="match status" value="1"/>
</dbReference>
<dbReference type="Gene3D" id="3.30.230.10">
    <property type="match status" value="1"/>
</dbReference>
<dbReference type="HAMAP" id="MF_01307_B">
    <property type="entry name" value="Ribosomal_uS5_B"/>
    <property type="match status" value="1"/>
</dbReference>
<dbReference type="InterPro" id="IPR020568">
    <property type="entry name" value="Ribosomal_Su5_D2-typ_SF"/>
</dbReference>
<dbReference type="InterPro" id="IPR000851">
    <property type="entry name" value="Ribosomal_uS5"/>
</dbReference>
<dbReference type="InterPro" id="IPR005712">
    <property type="entry name" value="Ribosomal_uS5_bac-type"/>
</dbReference>
<dbReference type="InterPro" id="IPR005324">
    <property type="entry name" value="Ribosomal_uS5_C"/>
</dbReference>
<dbReference type="InterPro" id="IPR013810">
    <property type="entry name" value="Ribosomal_uS5_N"/>
</dbReference>
<dbReference type="InterPro" id="IPR018192">
    <property type="entry name" value="Ribosomal_uS5_N_CS"/>
</dbReference>
<dbReference type="InterPro" id="IPR014721">
    <property type="entry name" value="Ribsml_uS5_D2-typ_fold_subgr"/>
</dbReference>
<dbReference type="NCBIfam" id="TIGR01021">
    <property type="entry name" value="rpsE_bact"/>
    <property type="match status" value="1"/>
</dbReference>
<dbReference type="PANTHER" id="PTHR48277">
    <property type="entry name" value="MITOCHONDRIAL RIBOSOMAL PROTEIN S5"/>
    <property type="match status" value="1"/>
</dbReference>
<dbReference type="PANTHER" id="PTHR48277:SF1">
    <property type="entry name" value="MITOCHONDRIAL RIBOSOMAL PROTEIN S5"/>
    <property type="match status" value="1"/>
</dbReference>
<dbReference type="Pfam" id="PF00333">
    <property type="entry name" value="Ribosomal_S5"/>
    <property type="match status" value="1"/>
</dbReference>
<dbReference type="Pfam" id="PF03719">
    <property type="entry name" value="Ribosomal_S5_C"/>
    <property type="match status" value="1"/>
</dbReference>
<dbReference type="SUPFAM" id="SSF54768">
    <property type="entry name" value="dsRNA-binding domain-like"/>
    <property type="match status" value="1"/>
</dbReference>
<dbReference type="SUPFAM" id="SSF54211">
    <property type="entry name" value="Ribosomal protein S5 domain 2-like"/>
    <property type="match status" value="1"/>
</dbReference>
<dbReference type="PROSITE" id="PS00585">
    <property type="entry name" value="RIBOSOMAL_S5"/>
    <property type="match status" value="1"/>
</dbReference>
<dbReference type="PROSITE" id="PS50881">
    <property type="entry name" value="S5_DSRBD"/>
    <property type="match status" value="1"/>
</dbReference>
<accession>A4TH09</accession>
<name>RS5_YERPP</name>
<organism>
    <name type="scientific">Yersinia pestis (strain Pestoides F)</name>
    <dbReference type="NCBI Taxonomy" id="386656"/>
    <lineage>
        <taxon>Bacteria</taxon>
        <taxon>Pseudomonadati</taxon>
        <taxon>Pseudomonadota</taxon>
        <taxon>Gammaproteobacteria</taxon>
        <taxon>Enterobacterales</taxon>
        <taxon>Yersiniaceae</taxon>
        <taxon>Yersinia</taxon>
    </lineage>
</organism>
<reference key="1">
    <citation type="submission" date="2007-02" db="EMBL/GenBank/DDBJ databases">
        <title>Complete sequence of chromosome of Yersinia pestis Pestoides F.</title>
        <authorList>
            <consortium name="US DOE Joint Genome Institute"/>
            <person name="Copeland A."/>
            <person name="Lucas S."/>
            <person name="Lapidus A."/>
            <person name="Barry K."/>
            <person name="Detter J.C."/>
            <person name="Glavina del Rio T."/>
            <person name="Hammon N."/>
            <person name="Israni S."/>
            <person name="Dalin E."/>
            <person name="Tice H."/>
            <person name="Pitluck S."/>
            <person name="Di Bartolo G."/>
            <person name="Chain P."/>
            <person name="Malfatti S."/>
            <person name="Shin M."/>
            <person name="Vergez L."/>
            <person name="Schmutz J."/>
            <person name="Larimer F."/>
            <person name="Land M."/>
            <person name="Hauser L."/>
            <person name="Worsham P."/>
            <person name="Chu M."/>
            <person name="Bearden S."/>
            <person name="Garcia E."/>
            <person name="Richardson P."/>
        </authorList>
    </citation>
    <scope>NUCLEOTIDE SEQUENCE [LARGE SCALE GENOMIC DNA]</scope>
    <source>
        <strain>Pestoides F</strain>
    </source>
</reference>
<keyword id="KW-0687">Ribonucleoprotein</keyword>
<keyword id="KW-0689">Ribosomal protein</keyword>
<keyword id="KW-0694">RNA-binding</keyword>
<keyword id="KW-0699">rRNA-binding</keyword>
<feature type="chain" id="PRO_1000086078" description="Small ribosomal subunit protein uS5">
    <location>
        <begin position="1"/>
        <end position="167"/>
    </location>
</feature>
<feature type="domain" description="S5 DRBM" evidence="1">
    <location>
        <begin position="11"/>
        <end position="74"/>
    </location>
</feature>
<protein>
    <recommendedName>
        <fullName evidence="1">Small ribosomal subunit protein uS5</fullName>
    </recommendedName>
    <alternativeName>
        <fullName evidence="2">30S ribosomal protein S5</fullName>
    </alternativeName>
</protein>
<gene>
    <name evidence="1" type="primary">rpsE</name>
    <name type="ordered locus">YPDSF_0150</name>
</gene>
<proteinExistence type="inferred from homology"/>